<name>LCCI_LEUGE</name>
<geneLocation type="plasmid">
    <name>pLG7.6</name>
</geneLocation>
<protein>
    <recommendedName>
        <fullName>Probable leucocin-A immunity protein</fullName>
    </recommendedName>
</protein>
<keyword id="KW-0079">Bacteriocin immunity</keyword>
<keyword id="KW-0614">Plasmid</keyword>
<organism>
    <name type="scientific">Leuconostoc gelidum</name>
    <dbReference type="NCBI Taxonomy" id="1244"/>
    <lineage>
        <taxon>Bacteria</taxon>
        <taxon>Bacillati</taxon>
        <taxon>Bacillota</taxon>
        <taxon>Bacilli</taxon>
        <taxon>Lactobacillales</taxon>
        <taxon>Lactobacillaceae</taxon>
        <taxon>Leuconostoc</taxon>
        <taxon>Leuconostoc gelidum group</taxon>
    </lineage>
</organism>
<reference key="1">
    <citation type="journal article" date="1991" name="J. Bacteriol.">
        <title>Characterization of leucocin A-UAL 187 and cloning of the bacteriocin gene from Leuconostoc gelidum.</title>
        <authorList>
            <person name="Hastings J.W."/>
            <person name="Sailer M."/>
            <person name="Johnson K."/>
            <person name="Roy K.L."/>
            <person name="Vederas J.C."/>
            <person name="Stiles M.E."/>
        </authorList>
    </citation>
    <scope>NUCLEOTIDE SEQUENCE [GENOMIC DNA]</scope>
    <source>
        <strain>UAL 187</strain>
    </source>
</reference>
<dbReference type="EMBL" id="M64371">
    <property type="protein sequence ID" value="AAA68004.1"/>
    <property type="molecule type" value="Genomic_DNA"/>
</dbReference>
<dbReference type="PIR" id="B41657">
    <property type="entry name" value="B41657"/>
</dbReference>
<dbReference type="SMR" id="P34035"/>
<dbReference type="GO" id="GO:0030153">
    <property type="term" value="P:bacteriocin immunity"/>
    <property type="evidence" value="ECO:0007669"/>
    <property type="project" value="UniProtKB-KW"/>
</dbReference>
<dbReference type="Gene3D" id="1.20.1440.50">
    <property type="entry name" value="Ta0600-like"/>
    <property type="match status" value="1"/>
</dbReference>
<dbReference type="InterPro" id="IPR015046">
    <property type="entry name" value="LciA_Immunity-like"/>
</dbReference>
<dbReference type="InterPro" id="IPR023130">
    <property type="entry name" value="Ta0600-like_sf"/>
</dbReference>
<dbReference type="Pfam" id="PF08951">
    <property type="entry name" value="EntA_Immun"/>
    <property type="match status" value="1"/>
</dbReference>
<dbReference type="SUPFAM" id="SSF109797">
    <property type="entry name" value="Bacteriocin immunity protein-like"/>
    <property type="match status" value="1"/>
</dbReference>
<feature type="chain" id="PRO_0000206196" description="Probable leucocin-A immunity protein">
    <location>
        <begin position="1"/>
        <end position="113"/>
    </location>
</feature>
<proteinExistence type="inferred from homology"/>
<sequence length="113" mass="12947">MRKNNILLDDAKIYTNKLYLLLIDRKDDAGYGDICDVLFQVSKKLDSTKNVEALINRLVNYIRITASTNRIKFSKDEEAVIIELGVIGQKAGLNGQYMADFSDKSQFYSIFER</sequence>
<accession>P34035</accession>
<comment type="function">
    <text>Imparts immunity to leucocin-A to naturally sensitive host strains.</text>
</comment>
<comment type="similarity">
    <text evidence="1">Belongs to the immunity protein EntA family.</text>
</comment>
<evidence type="ECO:0000305" key="1"/>